<gene>
    <name evidence="1" type="primary">ligA</name>
    <name type="ordered locus">FTN_1350</name>
</gene>
<keyword id="KW-0227">DNA damage</keyword>
<keyword id="KW-0234">DNA repair</keyword>
<keyword id="KW-0235">DNA replication</keyword>
<keyword id="KW-0436">Ligase</keyword>
<keyword id="KW-0460">Magnesium</keyword>
<keyword id="KW-0464">Manganese</keyword>
<keyword id="KW-0479">Metal-binding</keyword>
<keyword id="KW-0520">NAD</keyword>
<keyword id="KW-0862">Zinc</keyword>
<accession>A0Q7L0</accession>
<dbReference type="EC" id="6.5.1.2" evidence="1"/>
<dbReference type="EMBL" id="CP000439">
    <property type="protein sequence ID" value="ABK90225.1"/>
    <property type="molecule type" value="Genomic_DNA"/>
</dbReference>
<dbReference type="RefSeq" id="WP_003040194.1">
    <property type="nucleotide sequence ID" value="NC_008601.1"/>
</dbReference>
<dbReference type="SMR" id="A0Q7L0"/>
<dbReference type="KEGG" id="ftn:FTN_1350"/>
<dbReference type="KEGG" id="ftx:AW25_653"/>
<dbReference type="BioCyc" id="FTUL401614:G1G75-1395-MONOMER"/>
<dbReference type="Proteomes" id="UP000000762">
    <property type="component" value="Chromosome"/>
</dbReference>
<dbReference type="GO" id="GO:0005829">
    <property type="term" value="C:cytosol"/>
    <property type="evidence" value="ECO:0007669"/>
    <property type="project" value="TreeGrafter"/>
</dbReference>
<dbReference type="GO" id="GO:0003677">
    <property type="term" value="F:DNA binding"/>
    <property type="evidence" value="ECO:0007669"/>
    <property type="project" value="InterPro"/>
</dbReference>
<dbReference type="GO" id="GO:0003911">
    <property type="term" value="F:DNA ligase (NAD+) activity"/>
    <property type="evidence" value="ECO:0007669"/>
    <property type="project" value="UniProtKB-UniRule"/>
</dbReference>
<dbReference type="GO" id="GO:0046872">
    <property type="term" value="F:metal ion binding"/>
    <property type="evidence" value="ECO:0007669"/>
    <property type="project" value="UniProtKB-KW"/>
</dbReference>
<dbReference type="GO" id="GO:0006281">
    <property type="term" value="P:DNA repair"/>
    <property type="evidence" value="ECO:0007669"/>
    <property type="project" value="UniProtKB-KW"/>
</dbReference>
<dbReference type="GO" id="GO:0006260">
    <property type="term" value="P:DNA replication"/>
    <property type="evidence" value="ECO:0007669"/>
    <property type="project" value="UniProtKB-KW"/>
</dbReference>
<dbReference type="CDD" id="cd17748">
    <property type="entry name" value="BRCT_DNA_ligase_like"/>
    <property type="match status" value="1"/>
</dbReference>
<dbReference type="CDD" id="cd00114">
    <property type="entry name" value="LIGANc"/>
    <property type="match status" value="1"/>
</dbReference>
<dbReference type="FunFam" id="1.10.150.20:FF:000007">
    <property type="entry name" value="DNA ligase"/>
    <property type="match status" value="1"/>
</dbReference>
<dbReference type="FunFam" id="2.40.50.140:FF:000012">
    <property type="entry name" value="DNA ligase"/>
    <property type="match status" value="1"/>
</dbReference>
<dbReference type="FunFam" id="3.30.470.30:FF:000001">
    <property type="entry name" value="DNA ligase"/>
    <property type="match status" value="1"/>
</dbReference>
<dbReference type="Gene3D" id="6.20.10.30">
    <property type="match status" value="1"/>
</dbReference>
<dbReference type="Gene3D" id="1.10.150.20">
    <property type="entry name" value="5' to 3' exonuclease, C-terminal subdomain"/>
    <property type="match status" value="2"/>
</dbReference>
<dbReference type="Gene3D" id="3.40.50.10190">
    <property type="entry name" value="BRCT domain"/>
    <property type="match status" value="1"/>
</dbReference>
<dbReference type="Gene3D" id="3.30.470.30">
    <property type="entry name" value="DNA ligase/mRNA capping enzyme"/>
    <property type="match status" value="1"/>
</dbReference>
<dbReference type="Gene3D" id="1.10.287.610">
    <property type="entry name" value="Helix hairpin bin"/>
    <property type="match status" value="1"/>
</dbReference>
<dbReference type="Gene3D" id="2.40.50.140">
    <property type="entry name" value="Nucleic acid-binding proteins"/>
    <property type="match status" value="1"/>
</dbReference>
<dbReference type="HAMAP" id="MF_01588">
    <property type="entry name" value="DNA_ligase_A"/>
    <property type="match status" value="1"/>
</dbReference>
<dbReference type="InterPro" id="IPR001357">
    <property type="entry name" value="BRCT_dom"/>
</dbReference>
<dbReference type="InterPro" id="IPR036420">
    <property type="entry name" value="BRCT_dom_sf"/>
</dbReference>
<dbReference type="InterPro" id="IPR041663">
    <property type="entry name" value="DisA/LigA_HHH"/>
</dbReference>
<dbReference type="InterPro" id="IPR001679">
    <property type="entry name" value="DNA_ligase"/>
</dbReference>
<dbReference type="InterPro" id="IPR033136">
    <property type="entry name" value="DNA_ligase_CS"/>
</dbReference>
<dbReference type="InterPro" id="IPR013839">
    <property type="entry name" value="DNAligase_adenylation"/>
</dbReference>
<dbReference type="InterPro" id="IPR013840">
    <property type="entry name" value="DNAligase_N"/>
</dbReference>
<dbReference type="InterPro" id="IPR003583">
    <property type="entry name" value="Hlx-hairpin-Hlx_DNA-bd_motif"/>
</dbReference>
<dbReference type="InterPro" id="IPR012340">
    <property type="entry name" value="NA-bd_OB-fold"/>
</dbReference>
<dbReference type="InterPro" id="IPR004150">
    <property type="entry name" value="NAD_DNA_ligase_OB"/>
</dbReference>
<dbReference type="InterPro" id="IPR010994">
    <property type="entry name" value="RuvA_2-like"/>
</dbReference>
<dbReference type="InterPro" id="IPR004149">
    <property type="entry name" value="Znf_DNAligase_C4"/>
</dbReference>
<dbReference type="NCBIfam" id="TIGR00575">
    <property type="entry name" value="dnlj"/>
    <property type="match status" value="1"/>
</dbReference>
<dbReference type="NCBIfam" id="NF005932">
    <property type="entry name" value="PRK07956.1"/>
    <property type="match status" value="1"/>
</dbReference>
<dbReference type="PANTHER" id="PTHR23389">
    <property type="entry name" value="CHROMOSOME TRANSMISSION FIDELITY FACTOR 18"/>
    <property type="match status" value="1"/>
</dbReference>
<dbReference type="PANTHER" id="PTHR23389:SF9">
    <property type="entry name" value="DNA LIGASE"/>
    <property type="match status" value="1"/>
</dbReference>
<dbReference type="Pfam" id="PF00533">
    <property type="entry name" value="BRCT"/>
    <property type="match status" value="1"/>
</dbReference>
<dbReference type="Pfam" id="PF01653">
    <property type="entry name" value="DNA_ligase_aden"/>
    <property type="match status" value="1"/>
</dbReference>
<dbReference type="Pfam" id="PF03120">
    <property type="entry name" value="DNA_ligase_OB"/>
    <property type="match status" value="1"/>
</dbReference>
<dbReference type="Pfam" id="PF03119">
    <property type="entry name" value="DNA_ligase_ZBD"/>
    <property type="match status" value="1"/>
</dbReference>
<dbReference type="Pfam" id="PF12826">
    <property type="entry name" value="HHH_2"/>
    <property type="match status" value="1"/>
</dbReference>
<dbReference type="Pfam" id="PF14520">
    <property type="entry name" value="HHH_5"/>
    <property type="match status" value="1"/>
</dbReference>
<dbReference type="Pfam" id="PF22745">
    <property type="entry name" value="Nlig-Ia"/>
    <property type="match status" value="1"/>
</dbReference>
<dbReference type="PIRSF" id="PIRSF001604">
    <property type="entry name" value="LigA"/>
    <property type="match status" value="1"/>
</dbReference>
<dbReference type="SMART" id="SM00292">
    <property type="entry name" value="BRCT"/>
    <property type="match status" value="1"/>
</dbReference>
<dbReference type="SMART" id="SM00278">
    <property type="entry name" value="HhH1"/>
    <property type="match status" value="4"/>
</dbReference>
<dbReference type="SMART" id="SM00532">
    <property type="entry name" value="LIGANc"/>
    <property type="match status" value="1"/>
</dbReference>
<dbReference type="SUPFAM" id="SSF52113">
    <property type="entry name" value="BRCT domain"/>
    <property type="match status" value="1"/>
</dbReference>
<dbReference type="SUPFAM" id="SSF56091">
    <property type="entry name" value="DNA ligase/mRNA capping enzyme, catalytic domain"/>
    <property type="match status" value="1"/>
</dbReference>
<dbReference type="SUPFAM" id="SSF50249">
    <property type="entry name" value="Nucleic acid-binding proteins"/>
    <property type="match status" value="1"/>
</dbReference>
<dbReference type="SUPFAM" id="SSF47781">
    <property type="entry name" value="RuvA domain 2-like"/>
    <property type="match status" value="1"/>
</dbReference>
<dbReference type="PROSITE" id="PS50172">
    <property type="entry name" value="BRCT"/>
    <property type="match status" value="1"/>
</dbReference>
<dbReference type="PROSITE" id="PS01056">
    <property type="entry name" value="DNA_LIGASE_N2"/>
    <property type="match status" value="1"/>
</dbReference>
<proteinExistence type="inferred from homology"/>
<reference key="1">
    <citation type="journal article" date="2007" name="Genome Biol.">
        <title>Comparison of Francisella tularensis genomes reveals evolutionary events associated with the emergence of human pathogenic strains.</title>
        <authorList>
            <person name="Rohmer L."/>
            <person name="Fong C."/>
            <person name="Abmayr S."/>
            <person name="Wasnick M."/>
            <person name="Larson Freeman T.J."/>
            <person name="Radey M."/>
            <person name="Guina T."/>
            <person name="Svensson K."/>
            <person name="Hayden H.S."/>
            <person name="Jacobs M."/>
            <person name="Gallagher L.A."/>
            <person name="Manoil C."/>
            <person name="Ernst R.K."/>
            <person name="Drees B."/>
            <person name="Buckley D."/>
            <person name="Haugen E."/>
            <person name="Bovee D."/>
            <person name="Zhou Y."/>
            <person name="Chang J."/>
            <person name="Levy R."/>
            <person name="Lim R."/>
            <person name="Gillett W."/>
            <person name="Guenthener D."/>
            <person name="Kang A."/>
            <person name="Shaffer S.A."/>
            <person name="Taylor G."/>
            <person name="Chen J."/>
            <person name="Gallis B."/>
            <person name="D'Argenio D.A."/>
            <person name="Forsman M."/>
            <person name="Olson M.V."/>
            <person name="Goodlett D.R."/>
            <person name="Kaul R."/>
            <person name="Miller S.I."/>
            <person name="Brittnacher M.J."/>
        </authorList>
    </citation>
    <scope>NUCLEOTIDE SEQUENCE [LARGE SCALE GENOMIC DNA]</scope>
    <source>
        <strain>U112</strain>
    </source>
</reference>
<organism>
    <name type="scientific">Francisella tularensis subsp. novicida (strain U112)</name>
    <dbReference type="NCBI Taxonomy" id="401614"/>
    <lineage>
        <taxon>Bacteria</taxon>
        <taxon>Pseudomonadati</taxon>
        <taxon>Pseudomonadota</taxon>
        <taxon>Gammaproteobacteria</taxon>
        <taxon>Thiotrichales</taxon>
        <taxon>Francisellaceae</taxon>
        <taxon>Francisella</taxon>
    </lineage>
</organism>
<sequence length="678" mass="76407">MTPNEFFSIKYHILAKAELKAYIDKLADYLSQQSYLYHTLDKPIISDSDYDKLFRLLQDLVNDNPQFKPINSVLDRVGGEVLAEFETIKHKKKMTSLANVFSLEELRDFYDKIEYDIELECEPKMDGLAISIFYKNGKFDYAVTRGDGIQGEKVSENVKTIRNVPLKLNTSNPPEELEVRGEIILDKQSFLSLNEYMQTHENKTFANPRNAAAGSIRMLDSKVVAKRPLKLYSYGIGYFSKDFVHPETQFELMQLLQSFGFTISDNMFLAKNFSEVEEYHHKMSHQRADLAYDIDGLVFKVNNIKLQDIIGYTARGPKWAVAYKFPAEEVESEVLNVEFQVGRTGAITPVARLKPVAVGGVIVSNATLHNINEIKRKDIRVGDRVIVRRAGDVIPEVVKSLPQYRKSDAQMVEMPTNCPVCDSAIENVNDQAIYRCTGGWHCQAQTTERLKHFVSRKAMDIDKLGAKLIEQLVAANLIKYPADIYKLNFDQLTGLERMGAKSSQNVLDSIKKSKTPSLARFIFAIGIKDIGEVSSDVLANHFGSLESFRDAKFEELIEINDIGEIMANNIVSFWHDSLNIKIVEELLAIGIKIQNPVKVEHAYNESFTGKTVVITGSFENYGRTELTQLLKSIGAKVTSSVSKKTDMVICGDNAGSKLTKAQELGVEVILEDNLKDLL</sequence>
<protein>
    <recommendedName>
        <fullName evidence="1">DNA ligase</fullName>
        <ecNumber evidence="1">6.5.1.2</ecNumber>
    </recommendedName>
    <alternativeName>
        <fullName evidence="1">Polydeoxyribonucleotide synthase [NAD(+)]</fullName>
    </alternativeName>
</protein>
<evidence type="ECO:0000255" key="1">
    <source>
        <dbReference type="HAMAP-Rule" id="MF_01588"/>
    </source>
</evidence>
<comment type="function">
    <text evidence="1">DNA ligase that catalyzes the formation of phosphodiester linkages between 5'-phosphoryl and 3'-hydroxyl groups in double-stranded DNA using NAD as a coenzyme and as the energy source for the reaction. It is essential for DNA replication and repair of damaged DNA.</text>
</comment>
<comment type="catalytic activity">
    <reaction evidence="1">
        <text>NAD(+) + (deoxyribonucleotide)n-3'-hydroxyl + 5'-phospho-(deoxyribonucleotide)m = (deoxyribonucleotide)n+m + AMP + beta-nicotinamide D-nucleotide.</text>
        <dbReference type="EC" id="6.5.1.2"/>
    </reaction>
</comment>
<comment type="cofactor">
    <cofactor evidence="1">
        <name>Mg(2+)</name>
        <dbReference type="ChEBI" id="CHEBI:18420"/>
    </cofactor>
    <cofactor evidence="1">
        <name>Mn(2+)</name>
        <dbReference type="ChEBI" id="CHEBI:29035"/>
    </cofactor>
</comment>
<comment type="similarity">
    <text evidence="1">Belongs to the NAD-dependent DNA ligase family. LigA subfamily.</text>
</comment>
<name>DNLJ_FRATN</name>
<feature type="chain" id="PRO_0000313240" description="DNA ligase">
    <location>
        <begin position="1"/>
        <end position="678"/>
    </location>
</feature>
<feature type="domain" description="BRCT" evidence="1">
    <location>
        <begin position="602"/>
        <end position="678"/>
    </location>
</feature>
<feature type="active site" description="N6-AMP-lysine intermediate" evidence="1">
    <location>
        <position position="124"/>
    </location>
</feature>
<feature type="binding site" evidence="1">
    <location>
        <begin position="47"/>
        <end position="51"/>
    </location>
    <ligand>
        <name>NAD(+)</name>
        <dbReference type="ChEBI" id="CHEBI:57540"/>
    </ligand>
</feature>
<feature type="binding site" evidence="1">
    <location>
        <begin position="96"/>
        <end position="97"/>
    </location>
    <ligand>
        <name>NAD(+)</name>
        <dbReference type="ChEBI" id="CHEBI:57540"/>
    </ligand>
</feature>
<feature type="binding site" evidence="1">
    <location>
        <position position="122"/>
    </location>
    <ligand>
        <name>NAD(+)</name>
        <dbReference type="ChEBI" id="CHEBI:57540"/>
    </ligand>
</feature>
<feature type="binding site" evidence="1">
    <location>
        <position position="145"/>
    </location>
    <ligand>
        <name>NAD(+)</name>
        <dbReference type="ChEBI" id="CHEBI:57540"/>
    </ligand>
</feature>
<feature type="binding site" evidence="1">
    <location>
        <position position="182"/>
    </location>
    <ligand>
        <name>NAD(+)</name>
        <dbReference type="ChEBI" id="CHEBI:57540"/>
    </ligand>
</feature>
<feature type="binding site" evidence="1">
    <location>
        <position position="300"/>
    </location>
    <ligand>
        <name>NAD(+)</name>
        <dbReference type="ChEBI" id="CHEBI:57540"/>
    </ligand>
</feature>
<feature type="binding site" evidence="1">
    <location>
        <position position="324"/>
    </location>
    <ligand>
        <name>NAD(+)</name>
        <dbReference type="ChEBI" id="CHEBI:57540"/>
    </ligand>
</feature>
<feature type="binding site" evidence="1">
    <location>
        <position position="418"/>
    </location>
    <ligand>
        <name>Zn(2+)</name>
        <dbReference type="ChEBI" id="CHEBI:29105"/>
    </ligand>
</feature>
<feature type="binding site" evidence="1">
    <location>
        <position position="421"/>
    </location>
    <ligand>
        <name>Zn(2+)</name>
        <dbReference type="ChEBI" id="CHEBI:29105"/>
    </ligand>
</feature>
<feature type="binding site" evidence="1">
    <location>
        <position position="436"/>
    </location>
    <ligand>
        <name>Zn(2+)</name>
        <dbReference type="ChEBI" id="CHEBI:29105"/>
    </ligand>
</feature>
<feature type="binding site" evidence="1">
    <location>
        <position position="442"/>
    </location>
    <ligand>
        <name>Zn(2+)</name>
        <dbReference type="ChEBI" id="CHEBI:29105"/>
    </ligand>
</feature>